<proteinExistence type="evidence at protein level"/>
<evidence type="ECO:0000255" key="1">
    <source>
        <dbReference type="HAMAP-Rule" id="MF_01934"/>
    </source>
</evidence>
<evidence type="ECO:0000256" key="2">
    <source>
        <dbReference type="SAM" id="MobiDB-lite"/>
    </source>
</evidence>
<evidence type="ECO:0000269" key="3">
    <source>
    </source>
</evidence>
<evidence type="ECO:0000269" key="4">
    <source>
    </source>
</evidence>
<evidence type="ECO:0000305" key="5"/>
<name>MENB_BACSU</name>
<accession>P23966</accession>
<accession>O34567</accession>
<dbReference type="EC" id="4.1.3.36" evidence="1"/>
<dbReference type="EMBL" id="M74521">
    <property type="protein sequence ID" value="AAA50401.1"/>
    <property type="status" value="ALT_FRAME"/>
    <property type="molecule type" value="Genomic_DNA"/>
</dbReference>
<dbReference type="EMBL" id="M74538">
    <property type="protein sequence ID" value="AAC37016.1"/>
    <property type="status" value="ALT_FRAME"/>
    <property type="molecule type" value="Genomic_DNA"/>
</dbReference>
<dbReference type="EMBL" id="AF008220">
    <property type="protein sequence ID" value="AAC00226.1"/>
    <property type="molecule type" value="Genomic_DNA"/>
</dbReference>
<dbReference type="EMBL" id="AL009126">
    <property type="protein sequence ID" value="CAB15058.1"/>
    <property type="molecule type" value="Genomic_DNA"/>
</dbReference>
<dbReference type="PIR" id="F69656">
    <property type="entry name" value="F69656"/>
</dbReference>
<dbReference type="RefSeq" id="NP_390958.1">
    <property type="nucleotide sequence ID" value="NC_000964.3"/>
</dbReference>
<dbReference type="RefSeq" id="WP_003229054.1">
    <property type="nucleotide sequence ID" value="NZ_OZ025638.1"/>
</dbReference>
<dbReference type="SMR" id="P23966"/>
<dbReference type="FunCoup" id="P23966">
    <property type="interactions" value="410"/>
</dbReference>
<dbReference type="STRING" id="224308.BSU30800"/>
<dbReference type="jPOST" id="P23966"/>
<dbReference type="PaxDb" id="224308-BSU30800"/>
<dbReference type="EnsemblBacteria" id="CAB15058">
    <property type="protein sequence ID" value="CAB15058"/>
    <property type="gene ID" value="BSU_30800"/>
</dbReference>
<dbReference type="GeneID" id="86872412"/>
<dbReference type="GeneID" id="937195"/>
<dbReference type="KEGG" id="bsu:BSU30800"/>
<dbReference type="PATRIC" id="fig|224308.179.peg.3338"/>
<dbReference type="eggNOG" id="COG0447">
    <property type="taxonomic scope" value="Bacteria"/>
</dbReference>
<dbReference type="InParanoid" id="P23966"/>
<dbReference type="OrthoDB" id="9775794at2"/>
<dbReference type="PhylomeDB" id="P23966"/>
<dbReference type="BioCyc" id="BSUB:BSU30800-MONOMER"/>
<dbReference type="BioCyc" id="MetaCyc:MONOMER-13812"/>
<dbReference type="SIGNOR" id="P23966"/>
<dbReference type="UniPathway" id="UPA00079"/>
<dbReference type="UniPathway" id="UPA01057">
    <property type="reaction ID" value="UER00167"/>
</dbReference>
<dbReference type="Proteomes" id="UP000001570">
    <property type="component" value="Chromosome"/>
</dbReference>
<dbReference type="GO" id="GO:0005829">
    <property type="term" value="C:cytosol"/>
    <property type="evidence" value="ECO:0000318"/>
    <property type="project" value="GO_Central"/>
</dbReference>
<dbReference type="GO" id="GO:0008935">
    <property type="term" value="F:1,4-dihydroxy-2-naphthoyl-CoA synthase activity"/>
    <property type="evidence" value="ECO:0000314"/>
    <property type="project" value="UniProtKB"/>
</dbReference>
<dbReference type="GO" id="GO:0071890">
    <property type="term" value="F:bicarbonate binding"/>
    <property type="evidence" value="ECO:0000314"/>
    <property type="project" value="UniProtKB"/>
</dbReference>
<dbReference type="GO" id="GO:0009234">
    <property type="term" value="P:menaquinone biosynthetic process"/>
    <property type="evidence" value="ECO:0000318"/>
    <property type="project" value="GO_Central"/>
</dbReference>
<dbReference type="CDD" id="cd06558">
    <property type="entry name" value="crotonase-like"/>
    <property type="match status" value="1"/>
</dbReference>
<dbReference type="FunFam" id="1.10.12.10:FF:000003">
    <property type="entry name" value="1,4-dihydroxy-2-naphthoyl-CoA synthase"/>
    <property type="match status" value="1"/>
</dbReference>
<dbReference type="FunFam" id="3.90.226.10:FF:000003">
    <property type="entry name" value="1,4-dihydroxy-2-naphthoyl-CoA synthase"/>
    <property type="match status" value="1"/>
</dbReference>
<dbReference type="Gene3D" id="3.90.226.10">
    <property type="entry name" value="2-enoyl-CoA Hydratase, Chain A, domain 1"/>
    <property type="match status" value="1"/>
</dbReference>
<dbReference type="Gene3D" id="1.10.12.10">
    <property type="entry name" value="Lyase 2-enoyl-coa Hydratase, Chain A, domain 2"/>
    <property type="match status" value="1"/>
</dbReference>
<dbReference type="HAMAP" id="MF_01934">
    <property type="entry name" value="MenB"/>
    <property type="match status" value="1"/>
</dbReference>
<dbReference type="InterPro" id="IPR029045">
    <property type="entry name" value="ClpP/crotonase-like_dom_sf"/>
</dbReference>
<dbReference type="InterPro" id="IPR010198">
    <property type="entry name" value="DHNA-CoA_synthase_MenB"/>
</dbReference>
<dbReference type="InterPro" id="IPR018376">
    <property type="entry name" value="Enoyl-CoA_hyd/isom_CS"/>
</dbReference>
<dbReference type="InterPro" id="IPR001753">
    <property type="entry name" value="Enoyl-CoA_hydra/iso"/>
</dbReference>
<dbReference type="InterPro" id="IPR014748">
    <property type="entry name" value="Enoyl-CoA_hydra_C"/>
</dbReference>
<dbReference type="NCBIfam" id="TIGR01929">
    <property type="entry name" value="menB"/>
    <property type="match status" value="1"/>
</dbReference>
<dbReference type="NCBIfam" id="NF005637">
    <property type="entry name" value="PRK07396.1"/>
    <property type="match status" value="1"/>
</dbReference>
<dbReference type="PANTHER" id="PTHR43113:SF1">
    <property type="entry name" value="1,4-DIHYDROXY-2-NAPHTHOYL-COA SYNTHASE, PEROXISOMAL"/>
    <property type="match status" value="1"/>
</dbReference>
<dbReference type="PANTHER" id="PTHR43113">
    <property type="entry name" value="NUCLEOSIDE-DIPHOSPHATE-SUGAR EPIMERASE"/>
    <property type="match status" value="1"/>
</dbReference>
<dbReference type="Pfam" id="PF00378">
    <property type="entry name" value="ECH_1"/>
    <property type="match status" value="1"/>
</dbReference>
<dbReference type="SUPFAM" id="SSF52096">
    <property type="entry name" value="ClpP/crotonase"/>
    <property type="match status" value="1"/>
</dbReference>
<dbReference type="PROSITE" id="PS00166">
    <property type="entry name" value="ENOYL_COA_HYDRATASE"/>
    <property type="match status" value="1"/>
</dbReference>
<keyword id="KW-0456">Lyase</keyword>
<keyword id="KW-0474">Menaquinone biosynthesis</keyword>
<keyword id="KW-1185">Reference proteome</keyword>
<gene>
    <name evidence="1" type="primary">menB</name>
    <name type="ordered locus">BSU30800</name>
</gene>
<sequence length="271" mass="29899">MAEWKTKRTYDEILYETYNGIAKITINRPEVHNAFTPKTVAEMIDAFADARDDQNVGVIVLAGAGDKAFCSGGDQKVRGHGGYVGDDQIPRLNVLDLQRLIRVIPKPVVAMVSGYAIGGGHVLHIVCDLTIAADNAIFGQTGPKVGSFDAGYGSGYLARIVGHKKAREIWYLCRQYNAQEALDMGLVNTVVPLEQLEEETIKWCEEMLEKSPTALRFLKAAFNADTDGLAGIQQFAGDATLLYYTTDEAKEGRDSFKEKRKPDFGQFPRFP</sequence>
<comment type="function">
    <text evidence="1 3 4">Converts o-succinylbenzoyl-CoA (OSB-CoA) to 1,4-dihydroxy-2-naphthoyl-CoA (DHNA-CoA).</text>
</comment>
<comment type="catalytic activity">
    <reaction evidence="1 3">
        <text>2-succinylbenzoyl-CoA + H(+) = 1,4-dihydroxy-2-naphthoyl-CoA + H2O</text>
        <dbReference type="Rhea" id="RHEA:26562"/>
        <dbReference type="ChEBI" id="CHEBI:15377"/>
        <dbReference type="ChEBI" id="CHEBI:15378"/>
        <dbReference type="ChEBI" id="CHEBI:57364"/>
        <dbReference type="ChEBI" id="CHEBI:58897"/>
        <dbReference type="EC" id="4.1.3.36"/>
    </reaction>
</comment>
<comment type="cofactor">
    <cofactor evidence="1 3">
        <name>hydrogencarbonate</name>
        <dbReference type="ChEBI" id="CHEBI:17544"/>
    </cofactor>
    <text evidence="3">The hydrogencarbonate anion plays the same catalytic role (proton acceptor) as the side-chain carboxylate group of the essential 'Asp-185' found in actinobacteria, archaea, bacteroidetes, and deltaproteobacteria.</text>
</comment>
<comment type="pathway">
    <text evidence="1">Quinol/quinone metabolism; 1,4-dihydroxy-2-naphthoate biosynthesis; 1,4-dihydroxy-2-naphthoate from chorismate: step 6/7.</text>
</comment>
<comment type="pathway">
    <text evidence="1">Quinol/quinone metabolism; menaquinone biosynthesis.</text>
</comment>
<comment type="similarity">
    <text evidence="1">Belongs to the enoyl-CoA hydratase/isomerase family. MenB subfamily.</text>
</comment>
<comment type="sequence caution" evidence="5">
    <conflict type="frameshift">
        <sequence resource="EMBL-CDS" id="AAA50401"/>
    </conflict>
</comment>
<comment type="sequence caution" evidence="5">
    <conflict type="frameshift">
        <sequence resource="EMBL-CDS" id="AAC37016"/>
    </conflict>
</comment>
<feature type="chain" id="PRO_0000109324" description="1,4-dihydroxy-2-naphthoyl-CoA synthase">
    <location>
        <begin position="1"/>
        <end position="271"/>
    </location>
</feature>
<feature type="region of interest" description="Disordered" evidence="2">
    <location>
        <begin position="250"/>
        <end position="271"/>
    </location>
</feature>
<feature type="compositionally biased region" description="Basic and acidic residues" evidence="2">
    <location>
        <begin position="250"/>
        <end position="263"/>
    </location>
</feature>
<feature type="binding site" description="in other chain" evidence="1">
    <location>
        <begin position="71"/>
        <end position="75"/>
    </location>
    <ligand>
        <name>substrate</name>
        <note>ligand shared between two neighboring subunits</note>
    </ligand>
</feature>
<feature type="binding site" description="in other chain" evidence="1">
    <location>
        <position position="83"/>
    </location>
    <ligand>
        <name>substrate</name>
        <note>ligand shared between two neighboring subunits</note>
    </ligand>
</feature>
<feature type="binding site" description="in other chain" evidence="1">
    <location>
        <begin position="115"/>
        <end position="119"/>
    </location>
    <ligand>
        <name>substrate</name>
        <note>ligand shared between two neighboring subunits</note>
    </ligand>
</feature>
<feature type="binding site" evidence="1">
    <location>
        <begin position="140"/>
        <end position="142"/>
    </location>
    <ligand>
        <name>hydrogencarbonate</name>
        <dbReference type="ChEBI" id="CHEBI:17544"/>
    </ligand>
</feature>
<feature type="binding site" description="in other chain" evidence="1">
    <location>
        <position position="141"/>
    </location>
    <ligand>
        <name>substrate</name>
        <note>ligand shared between two neighboring subunits</note>
    </ligand>
</feature>
<feature type="binding site" description="in other chain" evidence="1">
    <location>
        <position position="147"/>
    </location>
    <ligand>
        <name>substrate</name>
        <note>ligand shared between two neighboring subunits</note>
    </ligand>
</feature>
<feature type="binding site" evidence="1">
    <location>
        <position position="244"/>
    </location>
    <ligand>
        <name>substrate</name>
        <note>ligand shared between two neighboring subunits</note>
    </ligand>
</feature>
<feature type="binding site" evidence="1">
    <location>
        <position position="259"/>
    </location>
    <ligand>
        <name>substrate</name>
        <note>ligand shared between two neighboring subunits</note>
    </ligand>
</feature>
<feature type="site" description="Important for catalysis" evidence="1">
    <location>
        <position position="83"/>
    </location>
</feature>
<feature type="site" description="Important for catalysis" evidence="1">
    <location>
        <position position="244"/>
    </location>
</feature>
<feature type="sequence conflict" description="In Ref. 1; AAA50401 and 2; AAC37016." evidence="5" ref="1 2">
    <original>I</original>
    <variation>D</variation>
    <location>
        <position position="13"/>
    </location>
</feature>
<protein>
    <recommendedName>
        <fullName evidence="1">1,4-dihydroxy-2-naphthoyl-CoA synthase</fullName>
        <shortName evidence="1">DHNA-CoA synthase</shortName>
        <ecNumber evidence="1">4.1.3.36</ecNumber>
    </recommendedName>
</protein>
<organism>
    <name type="scientific">Bacillus subtilis (strain 168)</name>
    <dbReference type="NCBI Taxonomy" id="224308"/>
    <lineage>
        <taxon>Bacteria</taxon>
        <taxon>Bacillati</taxon>
        <taxon>Bacillota</taxon>
        <taxon>Bacilli</taxon>
        <taxon>Bacillales</taxon>
        <taxon>Bacillaceae</taxon>
        <taxon>Bacillus</taxon>
    </lineage>
</organism>
<reference key="1">
    <citation type="journal article" date="1992" name="J. Bacteriol.">
        <title>Sequence organization and regulation of the Bacillus subtilis menBE operon.</title>
        <authorList>
            <person name="Driscoll J.R."/>
            <person name="Taber H.W."/>
        </authorList>
    </citation>
    <scope>NUCLEOTIDE SEQUENCE [GENOMIC DNA]</scope>
    <source>
        <strain>168 / RB1</strain>
    </source>
</reference>
<reference key="2">
    <citation type="journal article" date="1995" name="Gene">
        <title>Structural organization of a Bacillus subtilis operon encoding menaquinone biosynthetic enzymes.</title>
        <authorList>
            <person name="Rowland B."/>
            <person name="Hill K."/>
            <person name="Miller P."/>
            <person name="Driscoll J.R."/>
            <person name="Taber H.W."/>
        </authorList>
    </citation>
    <scope>NUCLEOTIDE SEQUENCE [GENOMIC DNA]</scope>
    <scope>FUNCTION IN MENAQUINONE BIOSYNTHESIS</scope>
    <source>
        <strain>168 / RB1</strain>
    </source>
</reference>
<reference key="3">
    <citation type="journal article" date="1997" name="Microbiology">
        <title>Sequencing and functional annotation of the Bacillus subtilis genes in the 200 kb rrnB-dnaB region.</title>
        <authorList>
            <person name="Lapidus A."/>
            <person name="Galleron N."/>
            <person name="Sorokin A."/>
            <person name="Ehrlich S.D."/>
        </authorList>
    </citation>
    <scope>NUCLEOTIDE SEQUENCE [GENOMIC DNA]</scope>
    <source>
        <strain>168</strain>
    </source>
</reference>
<reference key="4">
    <citation type="journal article" date="1997" name="Nature">
        <title>The complete genome sequence of the Gram-positive bacterium Bacillus subtilis.</title>
        <authorList>
            <person name="Kunst F."/>
            <person name="Ogasawara N."/>
            <person name="Moszer I."/>
            <person name="Albertini A.M."/>
            <person name="Alloni G."/>
            <person name="Azevedo V."/>
            <person name="Bertero M.G."/>
            <person name="Bessieres P."/>
            <person name="Bolotin A."/>
            <person name="Borchert S."/>
            <person name="Borriss R."/>
            <person name="Boursier L."/>
            <person name="Brans A."/>
            <person name="Braun M."/>
            <person name="Brignell S.C."/>
            <person name="Bron S."/>
            <person name="Brouillet S."/>
            <person name="Bruschi C.V."/>
            <person name="Caldwell B."/>
            <person name="Capuano V."/>
            <person name="Carter N.M."/>
            <person name="Choi S.-K."/>
            <person name="Codani J.-J."/>
            <person name="Connerton I.F."/>
            <person name="Cummings N.J."/>
            <person name="Daniel R.A."/>
            <person name="Denizot F."/>
            <person name="Devine K.M."/>
            <person name="Duesterhoeft A."/>
            <person name="Ehrlich S.D."/>
            <person name="Emmerson P.T."/>
            <person name="Entian K.-D."/>
            <person name="Errington J."/>
            <person name="Fabret C."/>
            <person name="Ferrari E."/>
            <person name="Foulger D."/>
            <person name="Fritz C."/>
            <person name="Fujita M."/>
            <person name="Fujita Y."/>
            <person name="Fuma S."/>
            <person name="Galizzi A."/>
            <person name="Galleron N."/>
            <person name="Ghim S.-Y."/>
            <person name="Glaser P."/>
            <person name="Goffeau A."/>
            <person name="Golightly E.J."/>
            <person name="Grandi G."/>
            <person name="Guiseppi G."/>
            <person name="Guy B.J."/>
            <person name="Haga K."/>
            <person name="Haiech J."/>
            <person name="Harwood C.R."/>
            <person name="Henaut A."/>
            <person name="Hilbert H."/>
            <person name="Holsappel S."/>
            <person name="Hosono S."/>
            <person name="Hullo M.-F."/>
            <person name="Itaya M."/>
            <person name="Jones L.-M."/>
            <person name="Joris B."/>
            <person name="Karamata D."/>
            <person name="Kasahara Y."/>
            <person name="Klaerr-Blanchard M."/>
            <person name="Klein C."/>
            <person name="Kobayashi Y."/>
            <person name="Koetter P."/>
            <person name="Koningstein G."/>
            <person name="Krogh S."/>
            <person name="Kumano M."/>
            <person name="Kurita K."/>
            <person name="Lapidus A."/>
            <person name="Lardinois S."/>
            <person name="Lauber J."/>
            <person name="Lazarevic V."/>
            <person name="Lee S.-M."/>
            <person name="Levine A."/>
            <person name="Liu H."/>
            <person name="Masuda S."/>
            <person name="Mauel C."/>
            <person name="Medigue C."/>
            <person name="Medina N."/>
            <person name="Mellado R.P."/>
            <person name="Mizuno M."/>
            <person name="Moestl D."/>
            <person name="Nakai S."/>
            <person name="Noback M."/>
            <person name="Noone D."/>
            <person name="O'Reilly M."/>
            <person name="Ogawa K."/>
            <person name="Ogiwara A."/>
            <person name="Oudega B."/>
            <person name="Park S.-H."/>
            <person name="Parro V."/>
            <person name="Pohl T.M."/>
            <person name="Portetelle D."/>
            <person name="Porwollik S."/>
            <person name="Prescott A.M."/>
            <person name="Presecan E."/>
            <person name="Pujic P."/>
            <person name="Purnelle B."/>
            <person name="Rapoport G."/>
            <person name="Rey M."/>
            <person name="Reynolds S."/>
            <person name="Rieger M."/>
            <person name="Rivolta C."/>
            <person name="Rocha E."/>
            <person name="Roche B."/>
            <person name="Rose M."/>
            <person name="Sadaie Y."/>
            <person name="Sato T."/>
            <person name="Scanlan E."/>
            <person name="Schleich S."/>
            <person name="Schroeter R."/>
            <person name="Scoffone F."/>
            <person name="Sekiguchi J."/>
            <person name="Sekowska A."/>
            <person name="Seror S.J."/>
            <person name="Serror P."/>
            <person name="Shin B.-S."/>
            <person name="Soldo B."/>
            <person name="Sorokin A."/>
            <person name="Tacconi E."/>
            <person name="Takagi T."/>
            <person name="Takahashi H."/>
            <person name="Takemaru K."/>
            <person name="Takeuchi M."/>
            <person name="Tamakoshi A."/>
            <person name="Tanaka T."/>
            <person name="Terpstra P."/>
            <person name="Tognoni A."/>
            <person name="Tosato V."/>
            <person name="Uchiyama S."/>
            <person name="Vandenbol M."/>
            <person name="Vannier F."/>
            <person name="Vassarotti A."/>
            <person name="Viari A."/>
            <person name="Wambutt R."/>
            <person name="Wedler E."/>
            <person name="Wedler H."/>
            <person name="Weitzenegger T."/>
            <person name="Winters P."/>
            <person name="Wipat A."/>
            <person name="Yamamoto H."/>
            <person name="Yamane K."/>
            <person name="Yasumoto K."/>
            <person name="Yata K."/>
            <person name="Yoshida K."/>
            <person name="Yoshikawa H.-F."/>
            <person name="Zumstein E."/>
            <person name="Yoshikawa H."/>
            <person name="Danchin A."/>
        </authorList>
    </citation>
    <scope>NUCLEOTIDE SEQUENCE [LARGE SCALE GENOMIC DNA]</scope>
    <source>
        <strain>168</strain>
    </source>
</reference>
<reference key="5">
    <citation type="journal article" date="2010" name="J. Biol. Chem.">
        <title>A bicarbonate cofactor modulates 1,4-dihydroxy-2-naphthoyl-coenzyme a synthase in menaquinone biosynthesis of Escherichia coli.</title>
        <authorList>
            <person name="Jiang M."/>
            <person name="Chen M."/>
            <person name="Guo Z.F."/>
            <person name="Guo Z."/>
        </authorList>
    </citation>
    <scope>FUNCTION AS A DHNA-COA SYNTHASE</scope>
    <scope>CATALYTIC ACTIVITY</scope>
    <scope>COFACTOR</scope>
</reference>